<protein>
    <recommendedName>
        <fullName evidence="1">CTP synthase</fullName>
        <ecNumber evidence="1">6.3.4.2</ecNumber>
    </recommendedName>
    <alternativeName>
        <fullName evidence="1">Cytidine 5'-triphosphate synthase</fullName>
    </alternativeName>
    <alternativeName>
        <fullName evidence="1">Cytidine triphosphate synthetase</fullName>
        <shortName evidence="1">CTP synthetase</shortName>
        <shortName evidence="1">CTPS</shortName>
    </alternativeName>
    <alternativeName>
        <fullName evidence="1">UTP--ammonia ligase</fullName>
    </alternativeName>
</protein>
<evidence type="ECO:0000255" key="1">
    <source>
        <dbReference type="HAMAP-Rule" id="MF_01227"/>
    </source>
</evidence>
<feature type="chain" id="PRO_1000139384" description="CTP synthase">
    <location>
        <begin position="1"/>
        <end position="535"/>
    </location>
</feature>
<feature type="domain" description="Glutamine amidotransferase type-1" evidence="1">
    <location>
        <begin position="292"/>
        <end position="534"/>
    </location>
</feature>
<feature type="region of interest" description="Amidoligase domain" evidence="1">
    <location>
        <begin position="1"/>
        <end position="267"/>
    </location>
</feature>
<feature type="active site" description="Nucleophile; for glutamine hydrolysis" evidence="1">
    <location>
        <position position="381"/>
    </location>
</feature>
<feature type="active site" evidence="1">
    <location>
        <position position="507"/>
    </location>
</feature>
<feature type="active site" evidence="1">
    <location>
        <position position="509"/>
    </location>
</feature>
<feature type="binding site" evidence="1">
    <location>
        <position position="13"/>
    </location>
    <ligand>
        <name>CTP</name>
        <dbReference type="ChEBI" id="CHEBI:37563"/>
        <note>allosteric inhibitor</note>
    </ligand>
</feature>
<feature type="binding site" evidence="1">
    <location>
        <position position="13"/>
    </location>
    <ligand>
        <name>UTP</name>
        <dbReference type="ChEBI" id="CHEBI:46398"/>
    </ligand>
</feature>
<feature type="binding site" evidence="1">
    <location>
        <begin position="14"/>
        <end position="19"/>
    </location>
    <ligand>
        <name>ATP</name>
        <dbReference type="ChEBI" id="CHEBI:30616"/>
    </ligand>
</feature>
<feature type="binding site" evidence="1">
    <location>
        <position position="54"/>
    </location>
    <ligand>
        <name>L-glutamine</name>
        <dbReference type="ChEBI" id="CHEBI:58359"/>
    </ligand>
</feature>
<feature type="binding site" evidence="1">
    <location>
        <position position="71"/>
    </location>
    <ligand>
        <name>ATP</name>
        <dbReference type="ChEBI" id="CHEBI:30616"/>
    </ligand>
</feature>
<feature type="binding site" evidence="1">
    <location>
        <position position="71"/>
    </location>
    <ligand>
        <name>Mg(2+)</name>
        <dbReference type="ChEBI" id="CHEBI:18420"/>
    </ligand>
</feature>
<feature type="binding site" evidence="1">
    <location>
        <position position="141"/>
    </location>
    <ligand>
        <name>Mg(2+)</name>
        <dbReference type="ChEBI" id="CHEBI:18420"/>
    </ligand>
</feature>
<feature type="binding site" evidence="1">
    <location>
        <begin position="148"/>
        <end position="150"/>
    </location>
    <ligand>
        <name>CTP</name>
        <dbReference type="ChEBI" id="CHEBI:37563"/>
        <note>allosteric inhibitor</note>
    </ligand>
</feature>
<feature type="binding site" evidence="1">
    <location>
        <begin position="188"/>
        <end position="193"/>
    </location>
    <ligand>
        <name>CTP</name>
        <dbReference type="ChEBI" id="CHEBI:37563"/>
        <note>allosteric inhibitor</note>
    </ligand>
</feature>
<feature type="binding site" evidence="1">
    <location>
        <begin position="188"/>
        <end position="193"/>
    </location>
    <ligand>
        <name>UTP</name>
        <dbReference type="ChEBI" id="CHEBI:46398"/>
    </ligand>
</feature>
<feature type="binding site" evidence="1">
    <location>
        <position position="224"/>
    </location>
    <ligand>
        <name>CTP</name>
        <dbReference type="ChEBI" id="CHEBI:37563"/>
        <note>allosteric inhibitor</note>
    </ligand>
</feature>
<feature type="binding site" evidence="1">
    <location>
        <position position="224"/>
    </location>
    <ligand>
        <name>UTP</name>
        <dbReference type="ChEBI" id="CHEBI:46398"/>
    </ligand>
</feature>
<feature type="binding site" evidence="1">
    <location>
        <position position="354"/>
    </location>
    <ligand>
        <name>L-glutamine</name>
        <dbReference type="ChEBI" id="CHEBI:58359"/>
    </ligand>
</feature>
<feature type="binding site" evidence="1">
    <location>
        <begin position="382"/>
        <end position="385"/>
    </location>
    <ligand>
        <name>L-glutamine</name>
        <dbReference type="ChEBI" id="CHEBI:58359"/>
    </ligand>
</feature>
<feature type="binding site" evidence="1">
    <location>
        <position position="405"/>
    </location>
    <ligand>
        <name>L-glutamine</name>
        <dbReference type="ChEBI" id="CHEBI:58359"/>
    </ligand>
</feature>
<feature type="binding site" evidence="1">
    <location>
        <position position="462"/>
    </location>
    <ligand>
        <name>L-glutamine</name>
        <dbReference type="ChEBI" id="CHEBI:58359"/>
    </ligand>
</feature>
<proteinExistence type="inferred from homology"/>
<reference key="1">
    <citation type="journal article" date="2004" name="J. Mol. Microbiol. Biotechnol.">
        <title>The complete genome sequence of Bacillus licheniformis DSM13, an organism with great industrial potential.</title>
        <authorList>
            <person name="Veith B."/>
            <person name="Herzberg C."/>
            <person name="Steckel S."/>
            <person name="Feesche J."/>
            <person name="Maurer K.H."/>
            <person name="Ehrenreich P."/>
            <person name="Baeumer S."/>
            <person name="Henne A."/>
            <person name="Liesegang H."/>
            <person name="Merkl R."/>
            <person name="Ehrenreich A."/>
            <person name="Gottschalk G."/>
        </authorList>
    </citation>
    <scope>NUCLEOTIDE SEQUENCE [LARGE SCALE GENOMIC DNA]</scope>
    <source>
        <strain>ATCC 14580 / DSM 13 / JCM 2505 / CCUG 7422 / NBRC 12200 / NCIMB 9375 / NCTC 10341 / NRRL NRS-1264 / Gibson 46</strain>
    </source>
</reference>
<reference key="2">
    <citation type="journal article" date="2004" name="Genome Biol.">
        <title>Complete genome sequence of the industrial bacterium Bacillus licheniformis and comparisons with closely related Bacillus species.</title>
        <authorList>
            <person name="Rey M.W."/>
            <person name="Ramaiya P."/>
            <person name="Nelson B.A."/>
            <person name="Brody-Karpin S.D."/>
            <person name="Zaretsky E.J."/>
            <person name="Tang M."/>
            <person name="Lopez de Leon A."/>
            <person name="Xiang H."/>
            <person name="Gusti V."/>
            <person name="Clausen I.G."/>
            <person name="Olsen P.B."/>
            <person name="Rasmussen M.D."/>
            <person name="Andersen J.T."/>
            <person name="Joergensen P.L."/>
            <person name="Larsen T.S."/>
            <person name="Sorokin A."/>
            <person name="Bolotin A."/>
            <person name="Lapidus A."/>
            <person name="Galleron N."/>
            <person name="Ehrlich S.D."/>
            <person name="Berka R.M."/>
        </authorList>
    </citation>
    <scope>NUCLEOTIDE SEQUENCE [LARGE SCALE GENOMIC DNA]</scope>
    <source>
        <strain>ATCC 14580 / DSM 13 / JCM 2505 / CCUG 7422 / NBRC 12200 / NCIMB 9375 / NCTC 10341 / NRRL NRS-1264 / Gibson 46</strain>
    </source>
</reference>
<sequence length="535" mass="59808">MTKYIFVTGGVVSSLGKGITASSLGRLLKNRGLNVTIQKFDPYINVDPGTMSPYQHGEVFVTDDGAETDLDLGHYERFIDINLNKYSNVTTGKIYSTVLKKERRGDYLGGTVQVIPHITNEIKDRVFRAGKETHADVVITEIGGTVGDIESLPFLEAIRQIKSDVGRDNVMYIHCTLVPYLKAAGEMKTKPTQHSVKELRSLGIQPNVIVVRTEMPISQDMKDKIALFCDIDPKAVIEAGDADTLYSIPLDLQKQGLDSLVCSHLKLDCREADMEEWKELVKKVKNLSKTVTIALVGKYVELPDAYISVVESLRHAGYAFDADIQVKWINAEEVTEDNVADLVQNADGILVPGGFGDRGVEGKITTVKYAREQKIPFFGICLGMQVASIEYARNVLGLEGAHSAEIDPSTPYPIIDLLPEQKDIEDLGGTLRLGLYPCKLQEGSKAYQAYENEVVYERHRHRYEFNNEFRQQMEEAGFVFSGTSPDGRLVEIIELKDHPWFVASQFHPEFTSRPTRPQALFRDFVHASLKTSEKL</sequence>
<comment type="function">
    <text evidence="1">Catalyzes the ATP-dependent amination of UTP to CTP with either L-glutamine or ammonia as the source of nitrogen. Regulates intracellular CTP levels through interactions with the four ribonucleotide triphosphates.</text>
</comment>
<comment type="catalytic activity">
    <reaction evidence="1">
        <text>UTP + L-glutamine + ATP + H2O = CTP + L-glutamate + ADP + phosphate + 2 H(+)</text>
        <dbReference type="Rhea" id="RHEA:26426"/>
        <dbReference type="ChEBI" id="CHEBI:15377"/>
        <dbReference type="ChEBI" id="CHEBI:15378"/>
        <dbReference type="ChEBI" id="CHEBI:29985"/>
        <dbReference type="ChEBI" id="CHEBI:30616"/>
        <dbReference type="ChEBI" id="CHEBI:37563"/>
        <dbReference type="ChEBI" id="CHEBI:43474"/>
        <dbReference type="ChEBI" id="CHEBI:46398"/>
        <dbReference type="ChEBI" id="CHEBI:58359"/>
        <dbReference type="ChEBI" id="CHEBI:456216"/>
        <dbReference type="EC" id="6.3.4.2"/>
    </reaction>
</comment>
<comment type="catalytic activity">
    <reaction evidence="1">
        <text>L-glutamine + H2O = L-glutamate + NH4(+)</text>
        <dbReference type="Rhea" id="RHEA:15889"/>
        <dbReference type="ChEBI" id="CHEBI:15377"/>
        <dbReference type="ChEBI" id="CHEBI:28938"/>
        <dbReference type="ChEBI" id="CHEBI:29985"/>
        <dbReference type="ChEBI" id="CHEBI:58359"/>
    </reaction>
</comment>
<comment type="catalytic activity">
    <reaction evidence="1">
        <text>UTP + NH4(+) + ATP = CTP + ADP + phosphate + 2 H(+)</text>
        <dbReference type="Rhea" id="RHEA:16597"/>
        <dbReference type="ChEBI" id="CHEBI:15378"/>
        <dbReference type="ChEBI" id="CHEBI:28938"/>
        <dbReference type="ChEBI" id="CHEBI:30616"/>
        <dbReference type="ChEBI" id="CHEBI:37563"/>
        <dbReference type="ChEBI" id="CHEBI:43474"/>
        <dbReference type="ChEBI" id="CHEBI:46398"/>
        <dbReference type="ChEBI" id="CHEBI:456216"/>
    </reaction>
</comment>
<comment type="activity regulation">
    <text evidence="1">Allosterically activated by GTP, when glutamine is the substrate; GTP has no effect on the reaction when ammonia is the substrate. The allosteric effector GTP functions by stabilizing the protein conformation that binds the tetrahedral intermediate(s) formed during glutamine hydrolysis. Inhibited by the product CTP, via allosteric rather than competitive inhibition.</text>
</comment>
<comment type="pathway">
    <text evidence="1">Pyrimidine metabolism; CTP biosynthesis via de novo pathway; CTP from UDP: step 2/2.</text>
</comment>
<comment type="subunit">
    <text evidence="1">Homotetramer.</text>
</comment>
<comment type="miscellaneous">
    <text evidence="1">CTPSs have evolved a hybrid strategy for distinguishing between UTP and CTP. The overlapping regions of the product feedback inhibitory and substrate sites recognize a common feature in both compounds, the triphosphate moiety. To differentiate isosteric substrate and product pyrimidine rings, an additional pocket far from the expected kinase/ligase catalytic site, specifically recognizes the cytosine and ribose portions of the product inhibitor.</text>
</comment>
<comment type="similarity">
    <text evidence="1">Belongs to the CTP synthase family.</text>
</comment>
<organism>
    <name type="scientific">Bacillus licheniformis (strain ATCC 14580 / DSM 13 / JCM 2505 / CCUG 7422 / NBRC 12200 / NCIMB 9375 / NCTC 10341 / NRRL NRS-1264 / Gibson 46)</name>
    <dbReference type="NCBI Taxonomy" id="279010"/>
    <lineage>
        <taxon>Bacteria</taxon>
        <taxon>Bacillati</taxon>
        <taxon>Bacillota</taxon>
        <taxon>Bacilli</taxon>
        <taxon>Bacillales</taxon>
        <taxon>Bacillaceae</taxon>
        <taxon>Bacillus</taxon>
    </lineage>
</organism>
<accession>Q65DT7</accession>
<accession>Q62PA9</accession>
<name>PYRG_BACLD</name>
<gene>
    <name evidence="1" type="primary">pyrG</name>
    <name type="ordered locus">BLi03963</name>
    <name type="ordered locus">BL03966</name>
</gene>
<keyword id="KW-0067">ATP-binding</keyword>
<keyword id="KW-0315">Glutamine amidotransferase</keyword>
<keyword id="KW-0436">Ligase</keyword>
<keyword id="KW-0460">Magnesium</keyword>
<keyword id="KW-0479">Metal-binding</keyword>
<keyword id="KW-0547">Nucleotide-binding</keyword>
<keyword id="KW-0665">Pyrimidine biosynthesis</keyword>
<keyword id="KW-1185">Reference proteome</keyword>
<dbReference type="EC" id="6.3.4.2" evidence="1"/>
<dbReference type="EMBL" id="CP000002">
    <property type="protein sequence ID" value="AAU25402.2"/>
    <property type="molecule type" value="Genomic_DNA"/>
</dbReference>
<dbReference type="EMBL" id="AE017333">
    <property type="protein sequence ID" value="AAU42777.1"/>
    <property type="molecule type" value="Genomic_DNA"/>
</dbReference>
<dbReference type="RefSeq" id="WP_003186064.1">
    <property type="nucleotide sequence ID" value="NC_006322.1"/>
</dbReference>
<dbReference type="SMR" id="Q65DT7"/>
<dbReference type="STRING" id="279010.BL03966"/>
<dbReference type="KEGG" id="bld:BLi03963"/>
<dbReference type="KEGG" id="bli:BL03966"/>
<dbReference type="eggNOG" id="COG0504">
    <property type="taxonomic scope" value="Bacteria"/>
</dbReference>
<dbReference type="HOGENOM" id="CLU_011675_5_0_9"/>
<dbReference type="UniPathway" id="UPA00159">
    <property type="reaction ID" value="UER00277"/>
</dbReference>
<dbReference type="Proteomes" id="UP000000606">
    <property type="component" value="Chromosome"/>
</dbReference>
<dbReference type="GO" id="GO:0005829">
    <property type="term" value="C:cytosol"/>
    <property type="evidence" value="ECO:0007669"/>
    <property type="project" value="TreeGrafter"/>
</dbReference>
<dbReference type="GO" id="GO:0005524">
    <property type="term" value="F:ATP binding"/>
    <property type="evidence" value="ECO:0007669"/>
    <property type="project" value="UniProtKB-KW"/>
</dbReference>
<dbReference type="GO" id="GO:0003883">
    <property type="term" value="F:CTP synthase activity"/>
    <property type="evidence" value="ECO:0007669"/>
    <property type="project" value="UniProtKB-UniRule"/>
</dbReference>
<dbReference type="GO" id="GO:0004359">
    <property type="term" value="F:glutaminase activity"/>
    <property type="evidence" value="ECO:0007669"/>
    <property type="project" value="RHEA"/>
</dbReference>
<dbReference type="GO" id="GO:0042802">
    <property type="term" value="F:identical protein binding"/>
    <property type="evidence" value="ECO:0007669"/>
    <property type="project" value="TreeGrafter"/>
</dbReference>
<dbReference type="GO" id="GO:0046872">
    <property type="term" value="F:metal ion binding"/>
    <property type="evidence" value="ECO:0007669"/>
    <property type="project" value="UniProtKB-KW"/>
</dbReference>
<dbReference type="GO" id="GO:0044210">
    <property type="term" value="P:'de novo' CTP biosynthetic process"/>
    <property type="evidence" value="ECO:0007669"/>
    <property type="project" value="UniProtKB-UniRule"/>
</dbReference>
<dbReference type="GO" id="GO:0019856">
    <property type="term" value="P:pyrimidine nucleobase biosynthetic process"/>
    <property type="evidence" value="ECO:0007669"/>
    <property type="project" value="TreeGrafter"/>
</dbReference>
<dbReference type="CDD" id="cd03113">
    <property type="entry name" value="CTPS_N"/>
    <property type="match status" value="1"/>
</dbReference>
<dbReference type="CDD" id="cd01746">
    <property type="entry name" value="GATase1_CTP_Synthase"/>
    <property type="match status" value="1"/>
</dbReference>
<dbReference type="FunFam" id="3.40.50.300:FF:000009">
    <property type="entry name" value="CTP synthase"/>
    <property type="match status" value="1"/>
</dbReference>
<dbReference type="FunFam" id="3.40.50.880:FF:000002">
    <property type="entry name" value="CTP synthase"/>
    <property type="match status" value="1"/>
</dbReference>
<dbReference type="Gene3D" id="3.40.50.880">
    <property type="match status" value="1"/>
</dbReference>
<dbReference type="Gene3D" id="3.40.50.300">
    <property type="entry name" value="P-loop containing nucleotide triphosphate hydrolases"/>
    <property type="match status" value="1"/>
</dbReference>
<dbReference type="HAMAP" id="MF_01227">
    <property type="entry name" value="PyrG"/>
    <property type="match status" value="1"/>
</dbReference>
<dbReference type="InterPro" id="IPR029062">
    <property type="entry name" value="Class_I_gatase-like"/>
</dbReference>
<dbReference type="InterPro" id="IPR004468">
    <property type="entry name" value="CTP_synthase"/>
</dbReference>
<dbReference type="InterPro" id="IPR017456">
    <property type="entry name" value="CTP_synthase_N"/>
</dbReference>
<dbReference type="InterPro" id="IPR017926">
    <property type="entry name" value="GATASE"/>
</dbReference>
<dbReference type="InterPro" id="IPR033828">
    <property type="entry name" value="GATase1_CTP_Synthase"/>
</dbReference>
<dbReference type="InterPro" id="IPR027417">
    <property type="entry name" value="P-loop_NTPase"/>
</dbReference>
<dbReference type="NCBIfam" id="NF003792">
    <property type="entry name" value="PRK05380.1"/>
    <property type="match status" value="1"/>
</dbReference>
<dbReference type="NCBIfam" id="TIGR00337">
    <property type="entry name" value="PyrG"/>
    <property type="match status" value="1"/>
</dbReference>
<dbReference type="PANTHER" id="PTHR11550">
    <property type="entry name" value="CTP SYNTHASE"/>
    <property type="match status" value="1"/>
</dbReference>
<dbReference type="PANTHER" id="PTHR11550:SF0">
    <property type="entry name" value="CTP SYNTHASE-RELATED"/>
    <property type="match status" value="1"/>
</dbReference>
<dbReference type="Pfam" id="PF06418">
    <property type="entry name" value="CTP_synth_N"/>
    <property type="match status" value="1"/>
</dbReference>
<dbReference type="Pfam" id="PF00117">
    <property type="entry name" value="GATase"/>
    <property type="match status" value="1"/>
</dbReference>
<dbReference type="SUPFAM" id="SSF52317">
    <property type="entry name" value="Class I glutamine amidotransferase-like"/>
    <property type="match status" value="1"/>
</dbReference>
<dbReference type="SUPFAM" id="SSF52540">
    <property type="entry name" value="P-loop containing nucleoside triphosphate hydrolases"/>
    <property type="match status" value="1"/>
</dbReference>
<dbReference type="PROSITE" id="PS51273">
    <property type="entry name" value="GATASE_TYPE_1"/>
    <property type="match status" value="1"/>
</dbReference>